<name>NTPPA_MOOTA</name>
<evidence type="ECO:0000255" key="1">
    <source>
        <dbReference type="HAMAP-Rule" id="MF_00528"/>
    </source>
</evidence>
<organism>
    <name type="scientific">Moorella thermoacetica (strain ATCC 39073 / JCM 9320)</name>
    <dbReference type="NCBI Taxonomy" id="264732"/>
    <lineage>
        <taxon>Bacteria</taxon>
        <taxon>Bacillati</taxon>
        <taxon>Bacillota</taxon>
        <taxon>Clostridia</taxon>
        <taxon>Moorellales</taxon>
        <taxon>Moorellaceae</taxon>
        <taxon>Moorella</taxon>
    </lineage>
</organism>
<accession>Q2RL24</accession>
<protein>
    <recommendedName>
        <fullName evidence="1">dTTP/UTP pyrophosphatase</fullName>
        <shortName evidence="1">dTTPase/UTPase</shortName>
        <ecNumber evidence="1">3.6.1.9</ecNumber>
    </recommendedName>
    <alternativeName>
        <fullName evidence="1">Nucleoside triphosphate pyrophosphatase</fullName>
    </alternativeName>
    <alternativeName>
        <fullName evidence="1">Nucleotide pyrophosphatase</fullName>
        <shortName evidence="1">Nucleotide PPase</shortName>
    </alternativeName>
</protein>
<reference key="1">
    <citation type="journal article" date="2008" name="Environ. Microbiol.">
        <title>The complete genome sequence of Moorella thermoacetica (f. Clostridium thermoaceticum).</title>
        <authorList>
            <person name="Pierce E."/>
            <person name="Xie G."/>
            <person name="Barabote R.D."/>
            <person name="Saunders E."/>
            <person name="Han C.S."/>
            <person name="Detter J.C."/>
            <person name="Richardson P."/>
            <person name="Brettin T.S."/>
            <person name="Das A."/>
            <person name="Ljungdahl L.G."/>
            <person name="Ragsdale S.W."/>
        </authorList>
    </citation>
    <scope>NUCLEOTIDE SEQUENCE [LARGE SCALE GENOMIC DNA]</scope>
    <source>
        <strain>ATCC 39073 / JCM 9320</strain>
    </source>
</reference>
<keyword id="KW-0963">Cytoplasm</keyword>
<keyword id="KW-0378">Hydrolase</keyword>
<keyword id="KW-0546">Nucleotide metabolism</keyword>
<comment type="function">
    <text evidence="1">Nucleoside triphosphate pyrophosphatase that hydrolyzes dTTP and UTP. May have a dual role in cell division arrest and in preventing the incorporation of modified nucleotides into cellular nucleic acids.</text>
</comment>
<comment type="catalytic activity">
    <reaction evidence="1">
        <text>dTTP + H2O = dTMP + diphosphate + H(+)</text>
        <dbReference type="Rhea" id="RHEA:28534"/>
        <dbReference type="ChEBI" id="CHEBI:15377"/>
        <dbReference type="ChEBI" id="CHEBI:15378"/>
        <dbReference type="ChEBI" id="CHEBI:33019"/>
        <dbReference type="ChEBI" id="CHEBI:37568"/>
        <dbReference type="ChEBI" id="CHEBI:63528"/>
        <dbReference type="EC" id="3.6.1.9"/>
    </reaction>
</comment>
<comment type="catalytic activity">
    <reaction evidence="1">
        <text>UTP + H2O = UMP + diphosphate + H(+)</text>
        <dbReference type="Rhea" id="RHEA:29395"/>
        <dbReference type="ChEBI" id="CHEBI:15377"/>
        <dbReference type="ChEBI" id="CHEBI:15378"/>
        <dbReference type="ChEBI" id="CHEBI:33019"/>
        <dbReference type="ChEBI" id="CHEBI:46398"/>
        <dbReference type="ChEBI" id="CHEBI:57865"/>
        <dbReference type="EC" id="3.6.1.9"/>
    </reaction>
</comment>
<comment type="cofactor">
    <cofactor evidence="1">
        <name>a divalent metal cation</name>
        <dbReference type="ChEBI" id="CHEBI:60240"/>
    </cofactor>
</comment>
<comment type="subcellular location">
    <subcellularLocation>
        <location evidence="1">Cytoplasm</location>
    </subcellularLocation>
</comment>
<comment type="similarity">
    <text evidence="1">Belongs to the Maf family. YhdE subfamily.</text>
</comment>
<gene>
    <name type="ordered locus">Moth_0535</name>
</gene>
<feature type="chain" id="PRO_0000267343" description="dTTP/UTP pyrophosphatase">
    <location>
        <begin position="1"/>
        <end position="194"/>
    </location>
</feature>
<feature type="active site" description="Proton acceptor" evidence="1">
    <location>
        <position position="69"/>
    </location>
</feature>
<feature type="site" description="Important for substrate specificity" evidence="1">
    <location>
        <position position="12"/>
    </location>
</feature>
<feature type="site" description="Important for substrate specificity" evidence="1">
    <location>
        <position position="70"/>
    </location>
</feature>
<feature type="site" description="Important for substrate specificity" evidence="1">
    <location>
        <position position="154"/>
    </location>
</feature>
<sequence>MSKLVLASASPRRRELLARLGLPFTIQPSRIDESVYRHLPPAARVEALALAKARAVAAGLTDALVLGADTLVVCEGRVLGKPDSPAAAARMLAFLSGRTHTVYTGVAVVQAPRGPEGVTHARTAVTFRHLTPDQIEAYVATGEPLDKAGAYGIQGRGALLVAGIEGDYFNVVGLPLVQVEELLAIFGVDVWGRV</sequence>
<dbReference type="EC" id="3.6.1.9" evidence="1"/>
<dbReference type="EMBL" id="CP000232">
    <property type="protein sequence ID" value="ABC18865.1"/>
    <property type="molecule type" value="Genomic_DNA"/>
</dbReference>
<dbReference type="RefSeq" id="YP_429408.1">
    <property type="nucleotide sequence ID" value="NC_007644.1"/>
</dbReference>
<dbReference type="SMR" id="Q2RL24"/>
<dbReference type="STRING" id="264732.Moth_0535"/>
<dbReference type="EnsemblBacteria" id="ABC18865">
    <property type="protein sequence ID" value="ABC18865"/>
    <property type="gene ID" value="Moth_0535"/>
</dbReference>
<dbReference type="KEGG" id="mta:Moth_0535"/>
<dbReference type="PATRIC" id="fig|264732.11.peg.577"/>
<dbReference type="eggNOG" id="COG0424">
    <property type="taxonomic scope" value="Bacteria"/>
</dbReference>
<dbReference type="HOGENOM" id="CLU_040416_0_0_9"/>
<dbReference type="OrthoDB" id="9807767at2"/>
<dbReference type="GO" id="GO:0005737">
    <property type="term" value="C:cytoplasm"/>
    <property type="evidence" value="ECO:0007669"/>
    <property type="project" value="UniProtKB-SubCell"/>
</dbReference>
<dbReference type="GO" id="GO:0036218">
    <property type="term" value="F:dTTP diphosphatase activity"/>
    <property type="evidence" value="ECO:0007669"/>
    <property type="project" value="RHEA"/>
</dbReference>
<dbReference type="GO" id="GO:0036221">
    <property type="term" value="F:UTP diphosphatase activity"/>
    <property type="evidence" value="ECO:0007669"/>
    <property type="project" value="RHEA"/>
</dbReference>
<dbReference type="GO" id="GO:0009117">
    <property type="term" value="P:nucleotide metabolic process"/>
    <property type="evidence" value="ECO:0007669"/>
    <property type="project" value="UniProtKB-KW"/>
</dbReference>
<dbReference type="CDD" id="cd00555">
    <property type="entry name" value="Maf"/>
    <property type="match status" value="1"/>
</dbReference>
<dbReference type="FunFam" id="3.90.950.10:FF:000005">
    <property type="entry name" value="7-methyl-GTP pyrophosphatase"/>
    <property type="match status" value="1"/>
</dbReference>
<dbReference type="Gene3D" id="3.90.950.10">
    <property type="match status" value="1"/>
</dbReference>
<dbReference type="HAMAP" id="MF_00528">
    <property type="entry name" value="Maf"/>
    <property type="match status" value="1"/>
</dbReference>
<dbReference type="InterPro" id="IPR029001">
    <property type="entry name" value="ITPase-like_fam"/>
</dbReference>
<dbReference type="InterPro" id="IPR003697">
    <property type="entry name" value="Maf-like"/>
</dbReference>
<dbReference type="NCBIfam" id="TIGR00172">
    <property type="entry name" value="maf"/>
    <property type="match status" value="1"/>
</dbReference>
<dbReference type="PANTHER" id="PTHR43213">
    <property type="entry name" value="BIFUNCTIONAL DTTP/UTP PYROPHOSPHATASE/METHYLTRANSFERASE PROTEIN-RELATED"/>
    <property type="match status" value="1"/>
</dbReference>
<dbReference type="PANTHER" id="PTHR43213:SF5">
    <property type="entry name" value="BIFUNCTIONAL DTTP_UTP PYROPHOSPHATASE_METHYLTRANSFERASE PROTEIN-RELATED"/>
    <property type="match status" value="1"/>
</dbReference>
<dbReference type="Pfam" id="PF02545">
    <property type="entry name" value="Maf"/>
    <property type="match status" value="1"/>
</dbReference>
<dbReference type="PIRSF" id="PIRSF006305">
    <property type="entry name" value="Maf"/>
    <property type="match status" value="1"/>
</dbReference>
<dbReference type="SUPFAM" id="SSF52972">
    <property type="entry name" value="ITPase-like"/>
    <property type="match status" value="1"/>
</dbReference>
<proteinExistence type="inferred from homology"/>